<proteinExistence type="evidence at protein level"/>
<evidence type="ECO:0000269" key="1">
    <source>
    </source>
</evidence>
<evidence type="ECO:0000305" key="2"/>
<organism>
    <name type="scientific">Pulchrana picturata</name>
    <name type="common">Malaysian fire frog</name>
    <name type="synonym">Hylarana picturata</name>
    <dbReference type="NCBI Taxonomy" id="395594"/>
    <lineage>
        <taxon>Eukaryota</taxon>
        <taxon>Metazoa</taxon>
        <taxon>Chordata</taxon>
        <taxon>Craniata</taxon>
        <taxon>Vertebrata</taxon>
        <taxon>Euteleostomi</taxon>
        <taxon>Amphibia</taxon>
        <taxon>Batrachia</taxon>
        <taxon>Anura</taxon>
        <taxon>Neobatrachia</taxon>
        <taxon>Ranoidea</taxon>
        <taxon>Ranidae</taxon>
        <taxon>Pulchrana</taxon>
    </lineage>
</organism>
<reference key="1">
    <citation type="journal article" date="2008" name="Toxicon">
        <title>Characterization of antimicrobial peptides from the skin secretions of the Malaysian frogs, Odorrana hosii and Hylarana picturata (Anura:Ranidae).</title>
        <authorList>
            <person name="Conlon J.M."/>
            <person name="Kolodziejek J."/>
            <person name="Nowotny N."/>
            <person name="Leprince J."/>
            <person name="Vaudry H."/>
            <person name="Coquet L."/>
            <person name="Jouenne T."/>
            <person name="King J.D."/>
        </authorList>
    </citation>
    <scope>PROTEIN SEQUENCE</scope>
    <scope>FUNCTION</scope>
    <scope>MASS SPECTROMETRY</scope>
    <source>
        <tissue>Skin secretion</tissue>
    </source>
</reference>
<protein>
    <recommendedName>
        <fullName>Brevinin-2PTe</fullName>
    </recommendedName>
</protein>
<comment type="function">
    <text evidence="1">Has antibacterial activity against the Gram-positive bacterium S.aureus ATCC 25923 (MIC=36 uM) and the Gram-negative bacterium E.coli ATCC 25726 (MIC=18 uM).</text>
</comment>
<comment type="subcellular location">
    <subcellularLocation>
        <location>Secreted</location>
    </subcellularLocation>
</comment>
<comment type="tissue specificity">
    <text>Expressed by the skin glands.</text>
</comment>
<comment type="mass spectrometry" mass="3401.0" method="MALDI" evidence="1"/>
<comment type="similarity">
    <text evidence="2">Belongs to the frog skin active peptide (FSAP) family. Brevinin subfamily.</text>
</comment>
<sequence length="33" mass="3405">GFLDSFKNAMIGVAKSVGKTALSTLACKIDKSC</sequence>
<accession>P0C8T7</accession>
<name>BR2E_PULPI</name>
<dbReference type="SMR" id="P0C8T7"/>
<dbReference type="GO" id="GO:0005576">
    <property type="term" value="C:extracellular region"/>
    <property type="evidence" value="ECO:0007669"/>
    <property type="project" value="UniProtKB-SubCell"/>
</dbReference>
<dbReference type="GO" id="GO:0042742">
    <property type="term" value="P:defense response to bacterium"/>
    <property type="evidence" value="ECO:0007669"/>
    <property type="project" value="UniProtKB-KW"/>
</dbReference>
<dbReference type="InterPro" id="IPR012521">
    <property type="entry name" value="Antimicrobial_frog_2"/>
</dbReference>
<dbReference type="Pfam" id="PF08023">
    <property type="entry name" value="Antimicrobial_2"/>
    <property type="match status" value="1"/>
</dbReference>
<keyword id="KW-0878">Amphibian defense peptide</keyword>
<keyword id="KW-0044">Antibiotic</keyword>
<keyword id="KW-0929">Antimicrobial</keyword>
<keyword id="KW-0903">Direct protein sequencing</keyword>
<keyword id="KW-1015">Disulfide bond</keyword>
<keyword id="KW-0964">Secreted</keyword>
<feature type="peptide" id="PRO_0000366045" description="Brevinin-2PTe">
    <location>
        <begin position="1"/>
        <end position="33"/>
    </location>
</feature>
<feature type="disulfide bond">
    <location>
        <begin position="27"/>
        <end position="33"/>
    </location>
</feature>